<sequence length="162" mass="16930">MASLTHIDAEGSARMVDVSDKAATTREALAEGRVAMAPATLELILSGNAKKGDVMGVARLAGIMAAKRTHELIPLCHPLMLTKVEVEVVPDSALPGLHVTARAKTTGQTGVEMEALTAVSVACLTIYDMAKAADRGMRIEGIRLLEKSGGASGHFRAEPPTD</sequence>
<evidence type="ECO:0000255" key="1">
    <source>
        <dbReference type="HAMAP-Rule" id="MF_01224"/>
    </source>
</evidence>
<organism>
    <name type="scientific">Xanthobacter autotrophicus (strain ATCC BAA-1158 / Py2)</name>
    <dbReference type="NCBI Taxonomy" id="78245"/>
    <lineage>
        <taxon>Bacteria</taxon>
        <taxon>Pseudomonadati</taxon>
        <taxon>Pseudomonadota</taxon>
        <taxon>Alphaproteobacteria</taxon>
        <taxon>Hyphomicrobiales</taxon>
        <taxon>Xanthobacteraceae</taxon>
        <taxon>Xanthobacter</taxon>
    </lineage>
</organism>
<proteinExistence type="inferred from homology"/>
<keyword id="KW-0456">Lyase</keyword>
<keyword id="KW-0501">Molybdenum cofactor biosynthesis</keyword>
<keyword id="KW-1185">Reference proteome</keyword>
<reference key="1">
    <citation type="submission" date="2007-07" db="EMBL/GenBank/DDBJ databases">
        <title>Complete sequence of chromosome of Xanthobacter autotrophicus Py2.</title>
        <authorList>
            <consortium name="US DOE Joint Genome Institute"/>
            <person name="Copeland A."/>
            <person name="Lucas S."/>
            <person name="Lapidus A."/>
            <person name="Barry K."/>
            <person name="Glavina del Rio T."/>
            <person name="Hammon N."/>
            <person name="Israni S."/>
            <person name="Dalin E."/>
            <person name="Tice H."/>
            <person name="Pitluck S."/>
            <person name="Sims D."/>
            <person name="Brettin T."/>
            <person name="Bruce D."/>
            <person name="Detter J.C."/>
            <person name="Han C."/>
            <person name="Tapia R."/>
            <person name="Brainard J."/>
            <person name="Schmutz J."/>
            <person name="Larimer F."/>
            <person name="Land M."/>
            <person name="Hauser L."/>
            <person name="Kyrpides N."/>
            <person name="Kim E."/>
            <person name="Ensigns S.A."/>
            <person name="Richardson P."/>
        </authorList>
    </citation>
    <scope>NUCLEOTIDE SEQUENCE [LARGE SCALE GENOMIC DNA]</scope>
    <source>
        <strain>ATCC BAA-1158 / Py2</strain>
    </source>
</reference>
<protein>
    <recommendedName>
        <fullName evidence="1">Cyclic pyranopterin monophosphate synthase</fullName>
        <ecNumber evidence="1">4.6.1.17</ecNumber>
    </recommendedName>
    <alternativeName>
        <fullName evidence="1">Molybdenum cofactor biosynthesis protein C</fullName>
    </alternativeName>
</protein>
<feature type="chain" id="PRO_1000139308" description="Cyclic pyranopterin monophosphate synthase">
    <location>
        <begin position="1"/>
        <end position="162"/>
    </location>
</feature>
<feature type="active site" evidence="1">
    <location>
        <position position="128"/>
    </location>
</feature>
<feature type="binding site" evidence="1">
    <location>
        <begin position="75"/>
        <end position="77"/>
    </location>
    <ligand>
        <name>substrate</name>
    </ligand>
</feature>
<feature type="binding site" evidence="1">
    <location>
        <begin position="113"/>
        <end position="114"/>
    </location>
    <ligand>
        <name>substrate</name>
    </ligand>
</feature>
<name>MOAC_XANP2</name>
<gene>
    <name evidence="1" type="primary">moaC</name>
    <name type="ordered locus">Xaut_4373</name>
</gene>
<accession>A7INK0</accession>
<dbReference type="EC" id="4.6.1.17" evidence="1"/>
<dbReference type="EMBL" id="CP000781">
    <property type="protein sequence ID" value="ABS69594.1"/>
    <property type="molecule type" value="Genomic_DNA"/>
</dbReference>
<dbReference type="SMR" id="A7INK0"/>
<dbReference type="STRING" id="78245.Xaut_4373"/>
<dbReference type="KEGG" id="xau:Xaut_4373"/>
<dbReference type="eggNOG" id="COG0315">
    <property type="taxonomic scope" value="Bacteria"/>
</dbReference>
<dbReference type="HOGENOM" id="CLU_074693_1_1_5"/>
<dbReference type="OrthoDB" id="9794429at2"/>
<dbReference type="PhylomeDB" id="A7INK0"/>
<dbReference type="UniPathway" id="UPA00344"/>
<dbReference type="Proteomes" id="UP000002417">
    <property type="component" value="Chromosome"/>
</dbReference>
<dbReference type="GO" id="GO:0061799">
    <property type="term" value="F:cyclic pyranopterin monophosphate synthase activity"/>
    <property type="evidence" value="ECO:0007669"/>
    <property type="project" value="UniProtKB-UniRule"/>
</dbReference>
<dbReference type="GO" id="GO:0006777">
    <property type="term" value="P:Mo-molybdopterin cofactor biosynthetic process"/>
    <property type="evidence" value="ECO:0007669"/>
    <property type="project" value="UniProtKB-UniRule"/>
</dbReference>
<dbReference type="CDD" id="cd01420">
    <property type="entry name" value="MoaC_PE"/>
    <property type="match status" value="1"/>
</dbReference>
<dbReference type="Gene3D" id="3.30.70.640">
    <property type="entry name" value="Molybdopterin cofactor biosynthesis C (MoaC) domain"/>
    <property type="match status" value="1"/>
</dbReference>
<dbReference type="HAMAP" id="MF_01224_B">
    <property type="entry name" value="MoaC_B"/>
    <property type="match status" value="1"/>
</dbReference>
<dbReference type="InterPro" id="IPR023045">
    <property type="entry name" value="MoaC"/>
</dbReference>
<dbReference type="InterPro" id="IPR047594">
    <property type="entry name" value="MoaC_bact/euk"/>
</dbReference>
<dbReference type="InterPro" id="IPR036522">
    <property type="entry name" value="MoaC_sf"/>
</dbReference>
<dbReference type="InterPro" id="IPR050105">
    <property type="entry name" value="MoCo_biosynth_MoaA/MoaC"/>
</dbReference>
<dbReference type="InterPro" id="IPR002820">
    <property type="entry name" value="Mopterin_CF_biosynth-C_dom"/>
</dbReference>
<dbReference type="NCBIfam" id="TIGR00581">
    <property type="entry name" value="moaC"/>
    <property type="match status" value="1"/>
</dbReference>
<dbReference type="NCBIfam" id="NF006870">
    <property type="entry name" value="PRK09364.1"/>
    <property type="match status" value="1"/>
</dbReference>
<dbReference type="PANTHER" id="PTHR22960:SF29">
    <property type="entry name" value="CYCLIC PYRANOPTERIN MONOPHOSPHATE SYNTHASE"/>
    <property type="match status" value="1"/>
</dbReference>
<dbReference type="PANTHER" id="PTHR22960">
    <property type="entry name" value="MOLYBDOPTERIN COFACTOR SYNTHESIS PROTEIN A"/>
    <property type="match status" value="1"/>
</dbReference>
<dbReference type="Pfam" id="PF01967">
    <property type="entry name" value="MoaC"/>
    <property type="match status" value="1"/>
</dbReference>
<dbReference type="SUPFAM" id="SSF55040">
    <property type="entry name" value="Molybdenum cofactor biosynthesis protein C, MoaC"/>
    <property type="match status" value="1"/>
</dbReference>
<comment type="function">
    <text evidence="1">Catalyzes the conversion of (8S)-3',8-cyclo-7,8-dihydroguanosine 5'-triphosphate to cyclic pyranopterin monophosphate (cPMP).</text>
</comment>
<comment type="catalytic activity">
    <reaction evidence="1">
        <text>(8S)-3',8-cyclo-7,8-dihydroguanosine 5'-triphosphate = cyclic pyranopterin phosphate + diphosphate</text>
        <dbReference type="Rhea" id="RHEA:49580"/>
        <dbReference type="ChEBI" id="CHEBI:33019"/>
        <dbReference type="ChEBI" id="CHEBI:59648"/>
        <dbReference type="ChEBI" id="CHEBI:131766"/>
        <dbReference type="EC" id="4.6.1.17"/>
    </reaction>
</comment>
<comment type="pathway">
    <text evidence="1">Cofactor biosynthesis; molybdopterin biosynthesis.</text>
</comment>
<comment type="subunit">
    <text evidence="1">Homohexamer; trimer of dimers.</text>
</comment>
<comment type="similarity">
    <text evidence="1">Belongs to the MoaC family.</text>
</comment>